<evidence type="ECO:0000255" key="1">
    <source>
        <dbReference type="HAMAP-Rule" id="MF_00166"/>
    </source>
</evidence>
<comment type="function">
    <text evidence="1">Activates ribosomal RNA transcription. Plays a direct role in upstream activation of rRNA promoters.</text>
</comment>
<comment type="subunit">
    <text evidence="1">Homodimer.</text>
</comment>
<comment type="similarity">
    <text evidence="1">Belongs to the transcriptional regulatory Fis family.</text>
</comment>
<proteinExistence type="inferred from homology"/>
<gene>
    <name evidence="1" type="primary">fis</name>
    <name type="ordered locus">CKO_04673</name>
</gene>
<accession>A8AQG0</accession>
<keyword id="KW-0010">Activator</keyword>
<keyword id="KW-0238">DNA-binding</keyword>
<keyword id="KW-1185">Reference proteome</keyword>
<keyword id="KW-0804">Transcription</keyword>
<keyword id="KW-0805">Transcription regulation</keyword>
<reference key="1">
    <citation type="submission" date="2007-08" db="EMBL/GenBank/DDBJ databases">
        <authorList>
            <consortium name="The Citrobacter koseri Genome Sequencing Project"/>
            <person name="McClelland M."/>
            <person name="Sanderson E.K."/>
            <person name="Porwollik S."/>
            <person name="Spieth J."/>
            <person name="Clifton W.S."/>
            <person name="Latreille P."/>
            <person name="Courtney L."/>
            <person name="Wang C."/>
            <person name="Pepin K."/>
            <person name="Bhonagiri V."/>
            <person name="Nash W."/>
            <person name="Johnson M."/>
            <person name="Thiruvilangam P."/>
            <person name="Wilson R."/>
        </authorList>
    </citation>
    <scope>NUCLEOTIDE SEQUENCE [LARGE SCALE GENOMIC DNA]</scope>
    <source>
        <strain>ATCC BAA-895 / CDC 4225-83 / SGSC4696</strain>
    </source>
</reference>
<dbReference type="EMBL" id="CP000822">
    <property type="protein sequence ID" value="ABV15723.1"/>
    <property type="molecule type" value="Genomic_DNA"/>
</dbReference>
<dbReference type="RefSeq" id="WP_000462905.1">
    <property type="nucleotide sequence ID" value="NC_009792.1"/>
</dbReference>
<dbReference type="SMR" id="A8AQG0"/>
<dbReference type="STRING" id="290338.CKO_04673"/>
<dbReference type="GeneID" id="98390389"/>
<dbReference type="KEGG" id="cko:CKO_04673"/>
<dbReference type="HOGENOM" id="CLU_158040_3_0_6"/>
<dbReference type="OrthoDB" id="9802388at2"/>
<dbReference type="Proteomes" id="UP000008148">
    <property type="component" value="Chromosome"/>
</dbReference>
<dbReference type="GO" id="GO:0003700">
    <property type="term" value="F:DNA-binding transcription factor activity"/>
    <property type="evidence" value="ECO:0007669"/>
    <property type="project" value="UniProtKB-UniRule"/>
</dbReference>
<dbReference type="GO" id="GO:0043565">
    <property type="term" value="F:sequence-specific DNA binding"/>
    <property type="evidence" value="ECO:0007669"/>
    <property type="project" value="InterPro"/>
</dbReference>
<dbReference type="FunFam" id="1.10.10.60:FF:000006">
    <property type="entry name" value="DNA-binding protein Fis"/>
    <property type="match status" value="1"/>
</dbReference>
<dbReference type="Gene3D" id="1.10.10.60">
    <property type="entry name" value="Homeodomain-like"/>
    <property type="match status" value="1"/>
</dbReference>
<dbReference type="HAMAP" id="MF_00166">
    <property type="entry name" value="DNA_binding_Fis"/>
    <property type="match status" value="1"/>
</dbReference>
<dbReference type="InterPro" id="IPR005412">
    <property type="entry name" value="Fis_DNA-bd"/>
</dbReference>
<dbReference type="InterPro" id="IPR009057">
    <property type="entry name" value="Homeodomain-like_sf"/>
</dbReference>
<dbReference type="InterPro" id="IPR002197">
    <property type="entry name" value="HTH_Fis"/>
</dbReference>
<dbReference type="InterPro" id="IPR050207">
    <property type="entry name" value="Trans_regulatory_Fis"/>
</dbReference>
<dbReference type="NCBIfam" id="NF001659">
    <property type="entry name" value="PRK00430.1"/>
    <property type="match status" value="1"/>
</dbReference>
<dbReference type="PANTHER" id="PTHR47918">
    <property type="entry name" value="DNA-BINDING PROTEIN FIS"/>
    <property type="match status" value="1"/>
</dbReference>
<dbReference type="PANTHER" id="PTHR47918:SF1">
    <property type="entry name" value="DNA-BINDING PROTEIN FIS"/>
    <property type="match status" value="1"/>
</dbReference>
<dbReference type="Pfam" id="PF02954">
    <property type="entry name" value="HTH_8"/>
    <property type="match status" value="1"/>
</dbReference>
<dbReference type="PIRSF" id="PIRSF002097">
    <property type="entry name" value="DNA-binding_Fis"/>
    <property type="match status" value="1"/>
</dbReference>
<dbReference type="PRINTS" id="PR01591">
    <property type="entry name" value="DNABINDNGFIS"/>
</dbReference>
<dbReference type="PRINTS" id="PR01590">
    <property type="entry name" value="HTHFIS"/>
</dbReference>
<dbReference type="SUPFAM" id="SSF46689">
    <property type="entry name" value="Homeodomain-like"/>
    <property type="match status" value="1"/>
</dbReference>
<protein>
    <recommendedName>
        <fullName evidence="1">DNA-binding protein Fis</fullName>
    </recommendedName>
</protein>
<feature type="chain" id="PRO_1000023322" description="DNA-binding protein Fis">
    <location>
        <begin position="1"/>
        <end position="98"/>
    </location>
</feature>
<feature type="DNA-binding region" description="H-T-H motif" evidence="1">
    <location>
        <begin position="74"/>
        <end position="93"/>
    </location>
</feature>
<name>FIS_CITK8</name>
<organism>
    <name type="scientific">Citrobacter koseri (strain ATCC BAA-895 / CDC 4225-83 / SGSC4696)</name>
    <dbReference type="NCBI Taxonomy" id="290338"/>
    <lineage>
        <taxon>Bacteria</taxon>
        <taxon>Pseudomonadati</taxon>
        <taxon>Pseudomonadota</taxon>
        <taxon>Gammaproteobacteria</taxon>
        <taxon>Enterobacterales</taxon>
        <taxon>Enterobacteriaceae</taxon>
        <taxon>Citrobacter</taxon>
    </lineage>
</organism>
<sequence>MFEQRVNSDVLTVSTVNSQDQVTQKPLRDSVKQALKNYFAQLNGQDVNDLYELVLAEVEQPLLDMVMQYTRGNQTRAALMMGINRGTLRKKLKKYGMN</sequence>